<keyword id="KW-0143">Chaperone</keyword>
<organism>
    <name type="scientific">Escherichia coli O9:H4 (strain HS)</name>
    <dbReference type="NCBI Taxonomy" id="331112"/>
    <lineage>
        <taxon>Bacteria</taxon>
        <taxon>Pseudomonadati</taxon>
        <taxon>Pseudomonadota</taxon>
        <taxon>Gammaproteobacteria</taxon>
        <taxon>Enterobacterales</taxon>
        <taxon>Enterobacteriaceae</taxon>
        <taxon>Escherichia</taxon>
    </lineage>
</organism>
<reference key="1">
    <citation type="journal article" date="2008" name="J. Bacteriol.">
        <title>The pangenome structure of Escherichia coli: comparative genomic analysis of E. coli commensal and pathogenic isolates.</title>
        <authorList>
            <person name="Rasko D.A."/>
            <person name="Rosovitz M.J."/>
            <person name="Myers G.S.A."/>
            <person name="Mongodin E.F."/>
            <person name="Fricke W.F."/>
            <person name="Gajer P."/>
            <person name="Crabtree J."/>
            <person name="Sebaihia M."/>
            <person name="Thomson N.R."/>
            <person name="Chaudhuri R."/>
            <person name="Henderson I.R."/>
            <person name="Sperandio V."/>
            <person name="Ravel J."/>
        </authorList>
    </citation>
    <scope>NUCLEOTIDE SEQUENCE [LARGE SCALE GENOMIC DNA]</scope>
    <source>
        <strain>HS</strain>
    </source>
</reference>
<name>HSCB_ECOHS</name>
<proteinExistence type="inferred from homology"/>
<accession>A8A333</accession>
<protein>
    <recommendedName>
        <fullName evidence="1">Co-chaperone protein HscB</fullName>
    </recommendedName>
    <alternativeName>
        <fullName evidence="1">Hsc20</fullName>
    </alternativeName>
</protein>
<feature type="chain" id="PRO_1000083007" description="Co-chaperone protein HscB">
    <location>
        <begin position="1"/>
        <end position="171"/>
    </location>
</feature>
<feature type="domain" description="J" evidence="1">
    <location>
        <begin position="2"/>
        <end position="74"/>
    </location>
</feature>
<dbReference type="EMBL" id="CP000802">
    <property type="protein sequence ID" value="ABV06937.1"/>
    <property type="molecule type" value="Genomic_DNA"/>
</dbReference>
<dbReference type="RefSeq" id="WP_000384413.1">
    <property type="nucleotide sequence ID" value="NC_009800.1"/>
</dbReference>
<dbReference type="BMRB" id="A8A333"/>
<dbReference type="SMR" id="A8A333"/>
<dbReference type="GeneID" id="75172640"/>
<dbReference type="KEGG" id="ecx:EcHS_A2678"/>
<dbReference type="HOGENOM" id="CLU_068529_2_0_6"/>
<dbReference type="GO" id="GO:1990230">
    <property type="term" value="C:iron-sulfur cluster transfer complex"/>
    <property type="evidence" value="ECO:0007669"/>
    <property type="project" value="TreeGrafter"/>
</dbReference>
<dbReference type="GO" id="GO:0001671">
    <property type="term" value="F:ATPase activator activity"/>
    <property type="evidence" value="ECO:0007669"/>
    <property type="project" value="InterPro"/>
</dbReference>
<dbReference type="GO" id="GO:0051087">
    <property type="term" value="F:protein-folding chaperone binding"/>
    <property type="evidence" value="ECO:0007669"/>
    <property type="project" value="InterPro"/>
</dbReference>
<dbReference type="GO" id="GO:0044571">
    <property type="term" value="P:[2Fe-2S] cluster assembly"/>
    <property type="evidence" value="ECO:0007669"/>
    <property type="project" value="InterPro"/>
</dbReference>
<dbReference type="GO" id="GO:0051259">
    <property type="term" value="P:protein complex oligomerization"/>
    <property type="evidence" value="ECO:0007669"/>
    <property type="project" value="InterPro"/>
</dbReference>
<dbReference type="GO" id="GO:0006457">
    <property type="term" value="P:protein folding"/>
    <property type="evidence" value="ECO:0007669"/>
    <property type="project" value="UniProtKB-UniRule"/>
</dbReference>
<dbReference type="CDD" id="cd06257">
    <property type="entry name" value="DnaJ"/>
    <property type="match status" value="1"/>
</dbReference>
<dbReference type="FunFam" id="1.10.287.110:FF:000008">
    <property type="entry name" value="Co-chaperone protein HscB"/>
    <property type="match status" value="1"/>
</dbReference>
<dbReference type="FunFam" id="1.20.1280.20:FF:000001">
    <property type="entry name" value="Co-chaperone protein HscB"/>
    <property type="match status" value="1"/>
</dbReference>
<dbReference type="Gene3D" id="1.10.287.110">
    <property type="entry name" value="DnaJ domain"/>
    <property type="match status" value="1"/>
</dbReference>
<dbReference type="Gene3D" id="1.20.1280.20">
    <property type="entry name" value="HscB, C-terminal domain"/>
    <property type="match status" value="1"/>
</dbReference>
<dbReference type="HAMAP" id="MF_00682">
    <property type="entry name" value="HscB"/>
    <property type="match status" value="1"/>
</dbReference>
<dbReference type="InterPro" id="IPR001623">
    <property type="entry name" value="DnaJ_domain"/>
</dbReference>
<dbReference type="InterPro" id="IPR004640">
    <property type="entry name" value="HscB"/>
</dbReference>
<dbReference type="InterPro" id="IPR036386">
    <property type="entry name" value="HscB_C_sf"/>
</dbReference>
<dbReference type="InterPro" id="IPR009073">
    <property type="entry name" value="HscB_oligo_C"/>
</dbReference>
<dbReference type="InterPro" id="IPR036869">
    <property type="entry name" value="J_dom_sf"/>
</dbReference>
<dbReference type="NCBIfam" id="TIGR00714">
    <property type="entry name" value="hscB"/>
    <property type="match status" value="1"/>
</dbReference>
<dbReference type="NCBIfam" id="NF003449">
    <property type="entry name" value="PRK05014.1"/>
    <property type="match status" value="1"/>
</dbReference>
<dbReference type="PANTHER" id="PTHR14021">
    <property type="entry name" value="IRON-SULFUR CLUSTER CO-CHAPERONE PROTEIN HSCB"/>
    <property type="match status" value="1"/>
</dbReference>
<dbReference type="PANTHER" id="PTHR14021:SF15">
    <property type="entry name" value="IRON-SULFUR CLUSTER CO-CHAPERONE PROTEIN HSCB"/>
    <property type="match status" value="1"/>
</dbReference>
<dbReference type="Pfam" id="PF07743">
    <property type="entry name" value="HSCB_C"/>
    <property type="match status" value="1"/>
</dbReference>
<dbReference type="SMART" id="SM00271">
    <property type="entry name" value="DnaJ"/>
    <property type="match status" value="1"/>
</dbReference>
<dbReference type="SUPFAM" id="SSF46565">
    <property type="entry name" value="Chaperone J-domain"/>
    <property type="match status" value="1"/>
</dbReference>
<dbReference type="SUPFAM" id="SSF47144">
    <property type="entry name" value="HSC20 (HSCB), C-terminal oligomerisation domain"/>
    <property type="match status" value="1"/>
</dbReference>
<dbReference type="PROSITE" id="PS50076">
    <property type="entry name" value="DNAJ_2"/>
    <property type="match status" value="1"/>
</dbReference>
<sequence length="171" mass="20138">MDYFTLFGLPARYQLDTQALSLRFQDLQRQYHPDKFASGSQAEQLAAVQQSATINQAWQTLRHPLMRAEYLLSLHGFDLASEQHTVRDTAFLMEQLELREELDEIEQAKDEARLESFIKRVKKMFDTRHQLMVEQLDNETWDAAADTVRKLRFLDKLRSSAEQLEEKLLDF</sequence>
<gene>
    <name evidence="1" type="primary">hscB</name>
    <name type="ordered locus">EcHS_A2678</name>
</gene>
<comment type="function">
    <text evidence="1">Co-chaperone involved in the maturation of iron-sulfur cluster-containing proteins. Seems to help targeting proteins to be folded toward HscA.</text>
</comment>
<comment type="subunit">
    <text evidence="1">Interacts with HscA and stimulates its ATPase activity. Interacts with IscU.</text>
</comment>
<comment type="similarity">
    <text evidence="1">Belongs to the HscB family.</text>
</comment>
<evidence type="ECO:0000255" key="1">
    <source>
        <dbReference type="HAMAP-Rule" id="MF_00682"/>
    </source>
</evidence>